<comment type="function">
    <text evidence="1">This protein is one of the early assembly proteins of the 50S ribosomal subunit, although it is not seen to bind rRNA by itself. It is important during the early stages of 50S assembly.</text>
</comment>
<comment type="subunit">
    <text evidence="1">Part of the 50S ribosomal subunit.</text>
</comment>
<comment type="similarity">
    <text evidence="1">Belongs to the universal ribosomal protein uL13 family.</text>
</comment>
<comment type="sequence caution" evidence="2">
    <conflict type="erroneous initiation">
        <sequence resource="EMBL-CDS" id="AAX67189"/>
    </conflict>
</comment>
<accession>Q57JC3</accession>
<gene>
    <name evidence="1" type="primary">rplM</name>
    <name type="ordered locus">SCH_3283</name>
</gene>
<proteinExistence type="inferred from homology"/>
<evidence type="ECO:0000255" key="1">
    <source>
        <dbReference type="HAMAP-Rule" id="MF_01366"/>
    </source>
</evidence>
<evidence type="ECO:0000305" key="2"/>
<dbReference type="EMBL" id="AE017220">
    <property type="protein sequence ID" value="AAX67189.1"/>
    <property type="status" value="ALT_INIT"/>
    <property type="molecule type" value="Genomic_DNA"/>
</dbReference>
<dbReference type="RefSeq" id="WP_000847559.1">
    <property type="nucleotide sequence ID" value="NC_006905.1"/>
</dbReference>
<dbReference type="SMR" id="Q57JC3"/>
<dbReference type="GeneID" id="89518067"/>
<dbReference type="KEGG" id="sec:SCH_3283"/>
<dbReference type="HOGENOM" id="CLU_082184_2_2_6"/>
<dbReference type="Proteomes" id="UP000000538">
    <property type="component" value="Chromosome"/>
</dbReference>
<dbReference type="GO" id="GO:0022625">
    <property type="term" value="C:cytosolic large ribosomal subunit"/>
    <property type="evidence" value="ECO:0007669"/>
    <property type="project" value="TreeGrafter"/>
</dbReference>
<dbReference type="GO" id="GO:0003729">
    <property type="term" value="F:mRNA binding"/>
    <property type="evidence" value="ECO:0007669"/>
    <property type="project" value="TreeGrafter"/>
</dbReference>
<dbReference type="GO" id="GO:0003735">
    <property type="term" value="F:structural constituent of ribosome"/>
    <property type="evidence" value="ECO:0007669"/>
    <property type="project" value="InterPro"/>
</dbReference>
<dbReference type="GO" id="GO:0017148">
    <property type="term" value="P:negative regulation of translation"/>
    <property type="evidence" value="ECO:0007669"/>
    <property type="project" value="TreeGrafter"/>
</dbReference>
<dbReference type="GO" id="GO:0006412">
    <property type="term" value="P:translation"/>
    <property type="evidence" value="ECO:0007669"/>
    <property type="project" value="UniProtKB-UniRule"/>
</dbReference>
<dbReference type="CDD" id="cd00392">
    <property type="entry name" value="Ribosomal_L13"/>
    <property type="match status" value="1"/>
</dbReference>
<dbReference type="FunFam" id="3.90.1180.10:FF:000001">
    <property type="entry name" value="50S ribosomal protein L13"/>
    <property type="match status" value="1"/>
</dbReference>
<dbReference type="Gene3D" id="3.90.1180.10">
    <property type="entry name" value="Ribosomal protein L13"/>
    <property type="match status" value="1"/>
</dbReference>
<dbReference type="HAMAP" id="MF_01366">
    <property type="entry name" value="Ribosomal_uL13"/>
    <property type="match status" value="1"/>
</dbReference>
<dbReference type="InterPro" id="IPR005822">
    <property type="entry name" value="Ribosomal_uL13"/>
</dbReference>
<dbReference type="InterPro" id="IPR005823">
    <property type="entry name" value="Ribosomal_uL13_bac-type"/>
</dbReference>
<dbReference type="InterPro" id="IPR023563">
    <property type="entry name" value="Ribosomal_uL13_CS"/>
</dbReference>
<dbReference type="InterPro" id="IPR036899">
    <property type="entry name" value="Ribosomal_uL13_sf"/>
</dbReference>
<dbReference type="NCBIfam" id="TIGR01066">
    <property type="entry name" value="rplM_bact"/>
    <property type="match status" value="1"/>
</dbReference>
<dbReference type="PANTHER" id="PTHR11545:SF2">
    <property type="entry name" value="LARGE RIBOSOMAL SUBUNIT PROTEIN UL13M"/>
    <property type="match status" value="1"/>
</dbReference>
<dbReference type="PANTHER" id="PTHR11545">
    <property type="entry name" value="RIBOSOMAL PROTEIN L13"/>
    <property type="match status" value="1"/>
</dbReference>
<dbReference type="Pfam" id="PF00572">
    <property type="entry name" value="Ribosomal_L13"/>
    <property type="match status" value="1"/>
</dbReference>
<dbReference type="PIRSF" id="PIRSF002181">
    <property type="entry name" value="Ribosomal_L13"/>
    <property type="match status" value="1"/>
</dbReference>
<dbReference type="SUPFAM" id="SSF52161">
    <property type="entry name" value="Ribosomal protein L13"/>
    <property type="match status" value="1"/>
</dbReference>
<dbReference type="PROSITE" id="PS00783">
    <property type="entry name" value="RIBOSOMAL_L13"/>
    <property type="match status" value="1"/>
</dbReference>
<organism>
    <name type="scientific">Salmonella choleraesuis (strain SC-B67)</name>
    <dbReference type="NCBI Taxonomy" id="321314"/>
    <lineage>
        <taxon>Bacteria</taxon>
        <taxon>Pseudomonadati</taxon>
        <taxon>Pseudomonadota</taxon>
        <taxon>Gammaproteobacteria</taxon>
        <taxon>Enterobacterales</taxon>
        <taxon>Enterobacteriaceae</taxon>
        <taxon>Salmonella</taxon>
    </lineage>
</organism>
<feature type="chain" id="PRO_0000261791" description="Large ribosomal subunit protein uL13">
    <location>
        <begin position="1"/>
        <end position="142"/>
    </location>
</feature>
<protein>
    <recommendedName>
        <fullName evidence="1">Large ribosomal subunit protein uL13</fullName>
    </recommendedName>
    <alternativeName>
        <fullName evidence="2">50S ribosomal protein L13</fullName>
    </alternativeName>
</protein>
<sequence>MKTFTAKPETVKRDWYVVDATGKTLGRLATELARRLRGKHKAEYTPHVDTGDYIIVLNADKVAVTGNKRTDKVYYHHTGHIGGIKQATFEEMIARRPERVIEIAVKGMLPKGPLGRAMFRKLKVYAGNEHNHAAQQPQVLDI</sequence>
<reference key="1">
    <citation type="journal article" date="2005" name="Nucleic Acids Res.">
        <title>The genome sequence of Salmonella enterica serovar Choleraesuis, a highly invasive and resistant zoonotic pathogen.</title>
        <authorList>
            <person name="Chiu C.-H."/>
            <person name="Tang P."/>
            <person name="Chu C."/>
            <person name="Hu S."/>
            <person name="Bao Q."/>
            <person name="Yu J."/>
            <person name="Chou Y.-Y."/>
            <person name="Wang H.-S."/>
            <person name="Lee Y.-S."/>
        </authorList>
    </citation>
    <scope>NUCLEOTIDE SEQUENCE [LARGE SCALE GENOMIC DNA]</scope>
    <source>
        <strain>SC-B67</strain>
    </source>
</reference>
<name>RL13_SALCH</name>
<keyword id="KW-0687">Ribonucleoprotein</keyword>
<keyword id="KW-0689">Ribosomal protein</keyword>